<protein>
    <recommendedName>
        <fullName>Peptide methionine sulfoxide reductase MsrA/MsrB</fullName>
    </recommendedName>
    <domain>
        <recommendedName>
            <fullName>Peptide methionine sulfoxide reductase MsrA</fullName>
            <shortName>Protein-methionine-S-oxide reductase</shortName>
            <ecNumber>1.8.4.11</ecNumber>
        </recommendedName>
        <alternativeName>
            <fullName>Peptide-methionine (S)-S-oxide reductase</fullName>
            <shortName>Peptide Met(O) reductase</shortName>
        </alternativeName>
    </domain>
    <domain>
        <recommendedName>
            <fullName>Peptide methionine sulfoxide reductase MsrB</fullName>
            <ecNumber>1.8.4.12</ecNumber>
        </recommendedName>
        <alternativeName>
            <fullName>Peptide-methionine (R)-S-oxide reductase</fullName>
        </alternativeName>
    </domain>
</protein>
<comment type="function">
    <text evidence="1">Has an important function as a repair enzyme for proteins that have been inactivated by oxidation. Catalyzes the reversible oxidation-reduction of methionine sulfoxide in proteins to methionine (By similarity).</text>
</comment>
<comment type="catalytic activity">
    <reaction>
        <text>L-methionyl-[protein] + [thioredoxin]-disulfide + H2O = L-methionyl-(S)-S-oxide-[protein] + [thioredoxin]-dithiol</text>
        <dbReference type="Rhea" id="RHEA:14217"/>
        <dbReference type="Rhea" id="RHEA-COMP:10698"/>
        <dbReference type="Rhea" id="RHEA-COMP:10700"/>
        <dbReference type="Rhea" id="RHEA-COMP:12313"/>
        <dbReference type="Rhea" id="RHEA-COMP:12315"/>
        <dbReference type="ChEBI" id="CHEBI:15377"/>
        <dbReference type="ChEBI" id="CHEBI:16044"/>
        <dbReference type="ChEBI" id="CHEBI:29950"/>
        <dbReference type="ChEBI" id="CHEBI:44120"/>
        <dbReference type="ChEBI" id="CHEBI:50058"/>
        <dbReference type="EC" id="1.8.4.11"/>
    </reaction>
</comment>
<comment type="catalytic activity">
    <reaction>
        <text>[thioredoxin]-disulfide + L-methionine + H2O = L-methionine (S)-S-oxide + [thioredoxin]-dithiol</text>
        <dbReference type="Rhea" id="RHEA:19993"/>
        <dbReference type="Rhea" id="RHEA-COMP:10698"/>
        <dbReference type="Rhea" id="RHEA-COMP:10700"/>
        <dbReference type="ChEBI" id="CHEBI:15377"/>
        <dbReference type="ChEBI" id="CHEBI:29950"/>
        <dbReference type="ChEBI" id="CHEBI:50058"/>
        <dbReference type="ChEBI" id="CHEBI:57844"/>
        <dbReference type="ChEBI" id="CHEBI:58772"/>
        <dbReference type="EC" id="1.8.4.11"/>
    </reaction>
</comment>
<comment type="catalytic activity">
    <reaction>
        <text>L-methionyl-[protein] + [thioredoxin]-disulfide + H2O = L-methionyl-(R)-S-oxide-[protein] + [thioredoxin]-dithiol</text>
        <dbReference type="Rhea" id="RHEA:24164"/>
        <dbReference type="Rhea" id="RHEA-COMP:10698"/>
        <dbReference type="Rhea" id="RHEA-COMP:10700"/>
        <dbReference type="Rhea" id="RHEA-COMP:12313"/>
        <dbReference type="Rhea" id="RHEA-COMP:12314"/>
        <dbReference type="ChEBI" id="CHEBI:15377"/>
        <dbReference type="ChEBI" id="CHEBI:16044"/>
        <dbReference type="ChEBI" id="CHEBI:29950"/>
        <dbReference type="ChEBI" id="CHEBI:45764"/>
        <dbReference type="ChEBI" id="CHEBI:50058"/>
        <dbReference type="EC" id="1.8.4.12"/>
    </reaction>
</comment>
<comment type="similarity">
    <text evidence="3">In the N-terminal section; belongs to the MsrA Met sulfoxide reductase family.</text>
</comment>
<comment type="similarity">
    <text evidence="3">In the C-terminal section; belongs to the MsrB Met sulfoxide reductase family.</text>
</comment>
<comment type="sequence caution" evidence="3">
    <conflict type="erroneous initiation">
        <sequence resource="EMBL-CDS" id="AAL98136"/>
    </conflict>
</comment>
<keyword id="KW-0511">Multifunctional enzyme</keyword>
<keyword id="KW-0560">Oxidoreductase</keyword>
<name>MSRAB_STRP8</name>
<gene>
    <name type="primary">msrAB</name>
    <name type="ordered locus">spyM18_1571</name>
</gene>
<feature type="chain" id="PRO_0000138524" description="Peptide methionine sulfoxide reductase MsrA/MsrB">
    <location>
        <begin position="1"/>
        <end position="309"/>
    </location>
</feature>
<feature type="domain" description="MsrB" evidence="2">
    <location>
        <begin position="170"/>
        <end position="293"/>
    </location>
</feature>
<feature type="region of interest" description="Peptide methionine sulfoxide reductase A">
    <location>
        <begin position="1"/>
        <end position="153"/>
    </location>
</feature>
<feature type="active site" evidence="1">
    <location>
        <position position="8"/>
    </location>
</feature>
<feature type="active site" description="Nucleophile" evidence="2">
    <location>
        <position position="282"/>
    </location>
</feature>
<dbReference type="EC" id="1.8.4.11"/>
<dbReference type="EC" id="1.8.4.12"/>
<dbReference type="EMBL" id="AE009949">
    <property type="protein sequence ID" value="AAL98136.1"/>
    <property type="status" value="ALT_INIT"/>
    <property type="molecule type" value="Genomic_DNA"/>
</dbReference>
<dbReference type="SMR" id="Q8P046"/>
<dbReference type="KEGG" id="spm:spyM18_1571"/>
<dbReference type="HOGENOM" id="CLU_031040_1_1_9"/>
<dbReference type="GO" id="GO:0005737">
    <property type="term" value="C:cytoplasm"/>
    <property type="evidence" value="ECO:0007669"/>
    <property type="project" value="TreeGrafter"/>
</dbReference>
<dbReference type="GO" id="GO:0033744">
    <property type="term" value="F:L-methionine:thioredoxin-disulfide S-oxidoreductase activity"/>
    <property type="evidence" value="ECO:0007669"/>
    <property type="project" value="RHEA"/>
</dbReference>
<dbReference type="GO" id="GO:0033743">
    <property type="term" value="F:peptide-methionine (R)-S-oxide reductase activity"/>
    <property type="evidence" value="ECO:0007669"/>
    <property type="project" value="UniProtKB-UniRule"/>
</dbReference>
<dbReference type="GO" id="GO:0008113">
    <property type="term" value="F:peptide-methionine (S)-S-oxide reductase activity"/>
    <property type="evidence" value="ECO:0007669"/>
    <property type="project" value="UniProtKB-UniRule"/>
</dbReference>
<dbReference type="GO" id="GO:0036211">
    <property type="term" value="P:protein modification process"/>
    <property type="evidence" value="ECO:0007669"/>
    <property type="project" value="UniProtKB-UniRule"/>
</dbReference>
<dbReference type="GO" id="GO:0030091">
    <property type="term" value="P:protein repair"/>
    <property type="evidence" value="ECO:0007669"/>
    <property type="project" value="InterPro"/>
</dbReference>
<dbReference type="GO" id="GO:0006979">
    <property type="term" value="P:response to oxidative stress"/>
    <property type="evidence" value="ECO:0007669"/>
    <property type="project" value="InterPro"/>
</dbReference>
<dbReference type="FunFam" id="3.30.1060.10:FF:000007">
    <property type="entry name" value="Peptide methionine sulfoxide reductase msrA/msrB"/>
    <property type="match status" value="1"/>
</dbReference>
<dbReference type="FunFam" id="2.170.150.20:FF:000003">
    <property type="entry name" value="Peptide methionine sulfoxide reductase MsrB"/>
    <property type="match status" value="1"/>
</dbReference>
<dbReference type="Gene3D" id="2.170.150.20">
    <property type="entry name" value="Peptide methionine sulfoxide reductase"/>
    <property type="match status" value="1"/>
</dbReference>
<dbReference type="Gene3D" id="3.30.1060.10">
    <property type="entry name" value="Peptide methionine sulphoxide reductase MsrA"/>
    <property type="match status" value="1"/>
</dbReference>
<dbReference type="HAMAP" id="MF_01401">
    <property type="entry name" value="MsrA"/>
    <property type="match status" value="1"/>
</dbReference>
<dbReference type="HAMAP" id="MF_01400">
    <property type="entry name" value="MsrB"/>
    <property type="match status" value="1"/>
</dbReference>
<dbReference type="InterPro" id="IPR002569">
    <property type="entry name" value="Met_Sox_Rdtase_MsrA_dom"/>
</dbReference>
<dbReference type="InterPro" id="IPR036509">
    <property type="entry name" value="Met_Sox_Rdtase_MsrA_sf"/>
</dbReference>
<dbReference type="InterPro" id="IPR028427">
    <property type="entry name" value="Met_Sox_Rdtase_MsrB"/>
</dbReference>
<dbReference type="InterPro" id="IPR002579">
    <property type="entry name" value="Met_Sox_Rdtase_MsrB_dom"/>
</dbReference>
<dbReference type="InterPro" id="IPR011057">
    <property type="entry name" value="Mss4-like_sf"/>
</dbReference>
<dbReference type="NCBIfam" id="TIGR00401">
    <property type="entry name" value="msrA"/>
    <property type="match status" value="1"/>
</dbReference>
<dbReference type="NCBIfam" id="TIGR00357">
    <property type="entry name" value="peptide-methionine (R)-S-oxide reductase MsrB"/>
    <property type="match status" value="1"/>
</dbReference>
<dbReference type="PANTHER" id="PTHR10173">
    <property type="entry name" value="METHIONINE SULFOXIDE REDUCTASE"/>
    <property type="match status" value="1"/>
</dbReference>
<dbReference type="PANTHER" id="PTHR10173:SF59">
    <property type="entry name" value="PEPTIDE METHIONINE SULFOXIDE REDUCTASE MSRA_MSRB"/>
    <property type="match status" value="1"/>
</dbReference>
<dbReference type="Pfam" id="PF01625">
    <property type="entry name" value="PMSR"/>
    <property type="match status" value="1"/>
</dbReference>
<dbReference type="Pfam" id="PF01641">
    <property type="entry name" value="SelR"/>
    <property type="match status" value="1"/>
</dbReference>
<dbReference type="SUPFAM" id="SSF51316">
    <property type="entry name" value="Mss4-like"/>
    <property type="match status" value="1"/>
</dbReference>
<dbReference type="SUPFAM" id="SSF55068">
    <property type="entry name" value="Peptide methionine sulfoxide reductase"/>
    <property type="match status" value="1"/>
</dbReference>
<dbReference type="PROSITE" id="PS51790">
    <property type="entry name" value="MSRB"/>
    <property type="match status" value="1"/>
</dbReference>
<sequence length="309" mass="35133">MIYLAGGCFWGVEEYFSQVDGVLDAVSGYANGRGDTTNYQLIHQTGHAETVEVAYDTNRISLKELLLHFFRIIDPTSLNKQGNDRGSQYRTGIYYTDKADLAIIDEVFKEKAKDYKKKIVVEKAPLKHFIKAEDYHQDYLKKNPNGYCHIDINQATYPVIDESKYPKPSATEIKEKLSADEYRVTQKNETEKAFSNRYWDSFDAGIYVDVVTGEPLFSSKDKFESGCGWPSFSRPISPDVVRYKEDKSFNMTRTEVRSRSGNSHLGHVFTDGPKDQGGLRYCINSLSITFIPKADMEAKGYGYLLSSVE</sequence>
<reference key="1">
    <citation type="journal article" date="2002" name="Proc. Natl. Acad. Sci. U.S.A.">
        <title>Genome sequence and comparative microarray analysis of serotype M18 group A Streptococcus strains associated with acute rheumatic fever outbreaks.</title>
        <authorList>
            <person name="Smoot J.C."/>
            <person name="Barbian K.D."/>
            <person name="Van Gompel J.J."/>
            <person name="Smoot L.M."/>
            <person name="Chaussee M.S."/>
            <person name="Sylva G.L."/>
            <person name="Sturdevant D.E."/>
            <person name="Ricklefs S.M."/>
            <person name="Porcella S.F."/>
            <person name="Parkins L.D."/>
            <person name="Beres S.B."/>
            <person name="Campbell D.S."/>
            <person name="Smith T.M."/>
            <person name="Zhang Q."/>
            <person name="Kapur V."/>
            <person name="Daly J.A."/>
            <person name="Veasy L.G."/>
            <person name="Musser J.M."/>
        </authorList>
    </citation>
    <scope>NUCLEOTIDE SEQUENCE [LARGE SCALE GENOMIC DNA]</scope>
    <source>
        <strain>MGAS8232</strain>
    </source>
</reference>
<evidence type="ECO:0000250" key="1"/>
<evidence type="ECO:0000255" key="2">
    <source>
        <dbReference type="PROSITE-ProRule" id="PRU01126"/>
    </source>
</evidence>
<evidence type="ECO:0000305" key="3"/>
<proteinExistence type="inferred from homology"/>
<organism>
    <name type="scientific">Streptococcus pyogenes serotype M18 (strain MGAS8232)</name>
    <dbReference type="NCBI Taxonomy" id="186103"/>
    <lineage>
        <taxon>Bacteria</taxon>
        <taxon>Bacillati</taxon>
        <taxon>Bacillota</taxon>
        <taxon>Bacilli</taxon>
        <taxon>Lactobacillales</taxon>
        <taxon>Streptococcaceae</taxon>
        <taxon>Streptococcus</taxon>
    </lineage>
</organism>
<accession>Q8P046</accession>